<keyword id="KW-0963">Cytoplasm</keyword>
<keyword id="KW-0539">Nucleus</keyword>
<keyword id="KW-1185">Reference proteome</keyword>
<keyword id="KW-0677">Repeat</keyword>
<keyword id="KW-0694">RNA-binding</keyword>
<keyword id="KW-0810">Translation regulation</keyword>
<gene>
    <name type="primary">APUM14</name>
    <name type="ordered locus">At5g43110</name>
    <name type="ORF">MMG4.14</name>
</gene>
<dbReference type="EMBL" id="AB008267">
    <property type="protein sequence ID" value="BAB08275.1"/>
    <property type="status" value="ALT_SEQ"/>
    <property type="molecule type" value="Genomic_DNA"/>
</dbReference>
<dbReference type="EMBL" id="CP002688">
    <property type="protein sequence ID" value="AED94911.1"/>
    <property type="molecule type" value="Genomic_DNA"/>
</dbReference>
<dbReference type="EMBL" id="DQ056705">
    <property type="protein sequence ID" value="AAY78851.1"/>
    <property type="molecule type" value="mRNA"/>
</dbReference>
<dbReference type="RefSeq" id="NP_199125.2">
    <property type="nucleotide sequence ID" value="NM_123677.2"/>
</dbReference>
<dbReference type="SMR" id="Q4PSD1"/>
<dbReference type="STRING" id="3702.Q4PSD1"/>
<dbReference type="PaxDb" id="3702-AT5G43110.1"/>
<dbReference type="EnsemblPlants" id="AT5G43110.1">
    <property type="protein sequence ID" value="AT5G43110.1"/>
    <property type="gene ID" value="AT5G43110"/>
</dbReference>
<dbReference type="GeneID" id="834328"/>
<dbReference type="Gramene" id="AT5G43110.1">
    <property type="protein sequence ID" value="AT5G43110.1"/>
    <property type="gene ID" value="AT5G43110"/>
</dbReference>
<dbReference type="KEGG" id="ath:AT5G43110"/>
<dbReference type="Araport" id="AT5G43110"/>
<dbReference type="TAIR" id="AT5G43110">
    <property type="gene designation" value="PUM14"/>
</dbReference>
<dbReference type="eggNOG" id="KOG2049">
    <property type="taxonomic scope" value="Eukaryota"/>
</dbReference>
<dbReference type="HOGENOM" id="CLU_533583_0_0_1"/>
<dbReference type="InParanoid" id="Q4PSD1"/>
<dbReference type="OMA" id="HECSSQQ"/>
<dbReference type="PhylomeDB" id="Q4PSD1"/>
<dbReference type="PRO" id="PR:Q4PSD1"/>
<dbReference type="Proteomes" id="UP000006548">
    <property type="component" value="Chromosome 5"/>
</dbReference>
<dbReference type="ExpressionAtlas" id="Q4PSD1">
    <property type="expression patterns" value="baseline and differential"/>
</dbReference>
<dbReference type="GO" id="GO:0005737">
    <property type="term" value="C:cytoplasm"/>
    <property type="evidence" value="ECO:0000314"/>
    <property type="project" value="TAIR"/>
</dbReference>
<dbReference type="GO" id="GO:0005634">
    <property type="term" value="C:nucleus"/>
    <property type="evidence" value="ECO:0000314"/>
    <property type="project" value="TAIR"/>
</dbReference>
<dbReference type="GO" id="GO:0003723">
    <property type="term" value="F:RNA binding"/>
    <property type="evidence" value="ECO:0007669"/>
    <property type="project" value="UniProtKB-KW"/>
</dbReference>
<dbReference type="GO" id="GO:0006417">
    <property type="term" value="P:regulation of translation"/>
    <property type="evidence" value="ECO:0007669"/>
    <property type="project" value="UniProtKB-KW"/>
</dbReference>
<dbReference type="Gene3D" id="1.25.10.10">
    <property type="entry name" value="Leucine-rich Repeat Variant"/>
    <property type="match status" value="1"/>
</dbReference>
<dbReference type="InterPro" id="IPR011989">
    <property type="entry name" value="ARM-like"/>
</dbReference>
<dbReference type="InterPro" id="IPR016024">
    <property type="entry name" value="ARM-type_fold"/>
</dbReference>
<dbReference type="InterPro" id="IPR033133">
    <property type="entry name" value="PUM-HD"/>
</dbReference>
<dbReference type="InterPro" id="IPR001313">
    <property type="entry name" value="Pumilio_RNA-bd_rpt"/>
</dbReference>
<dbReference type="PANTHER" id="PTHR12537:SF186">
    <property type="entry name" value="PUMILIO HOMOLOG 14-RELATED"/>
    <property type="match status" value="1"/>
</dbReference>
<dbReference type="PANTHER" id="PTHR12537">
    <property type="entry name" value="RNA BINDING PROTEIN PUMILIO-RELATED"/>
    <property type="match status" value="1"/>
</dbReference>
<dbReference type="Pfam" id="PF00806">
    <property type="entry name" value="PUF"/>
    <property type="match status" value="6"/>
</dbReference>
<dbReference type="SMART" id="SM00025">
    <property type="entry name" value="Pumilio"/>
    <property type="match status" value="7"/>
</dbReference>
<dbReference type="SUPFAM" id="SSF48371">
    <property type="entry name" value="ARM repeat"/>
    <property type="match status" value="1"/>
</dbReference>
<dbReference type="PROSITE" id="PS50302">
    <property type="entry name" value="PUM"/>
    <property type="match status" value="7"/>
</dbReference>
<dbReference type="PROSITE" id="PS50303">
    <property type="entry name" value="PUM_HD"/>
    <property type="match status" value="1"/>
</dbReference>
<proteinExistence type="evidence at transcript level"/>
<evidence type="ECO:0000250" key="1"/>
<evidence type="ECO:0000255" key="2">
    <source>
        <dbReference type="PROSITE-ProRule" id="PRU00318"/>
    </source>
</evidence>
<evidence type="ECO:0000256" key="3">
    <source>
        <dbReference type="SAM" id="MobiDB-lite"/>
    </source>
</evidence>
<evidence type="ECO:0000305" key="4"/>
<accession>Q4PSD1</accession>
<accession>Q9FMH2</accession>
<reference key="1">
    <citation type="journal article" date="1997" name="DNA Res.">
        <title>Structural analysis of Arabidopsis thaliana chromosome 5. III. Sequence features of the regions of 1,191,918 bp covered by seventeen physically assigned P1 clones.</title>
        <authorList>
            <person name="Nakamura Y."/>
            <person name="Sato S."/>
            <person name="Kaneko T."/>
            <person name="Kotani H."/>
            <person name="Asamizu E."/>
            <person name="Miyajima N."/>
            <person name="Tabata S."/>
        </authorList>
    </citation>
    <scope>NUCLEOTIDE SEQUENCE [LARGE SCALE GENOMIC DNA]</scope>
    <source>
        <strain>cv. Columbia</strain>
    </source>
</reference>
<reference key="2">
    <citation type="journal article" date="2017" name="Plant J.">
        <title>Araport11: a complete reannotation of the Arabidopsis thaliana reference genome.</title>
        <authorList>
            <person name="Cheng C.Y."/>
            <person name="Krishnakumar V."/>
            <person name="Chan A.P."/>
            <person name="Thibaud-Nissen F."/>
            <person name="Schobel S."/>
            <person name="Town C.D."/>
        </authorList>
    </citation>
    <scope>GENOME REANNOTATION</scope>
    <source>
        <strain>cv. Columbia</strain>
    </source>
</reference>
<reference key="3">
    <citation type="journal article" date="2006" name="Plant Biotechnol. J.">
        <title>Simultaneous high-throughput recombinational cloning of open reading frames in closed and open configurations.</title>
        <authorList>
            <person name="Underwood B.A."/>
            <person name="Vanderhaeghen R."/>
            <person name="Whitford R."/>
            <person name="Town C.D."/>
            <person name="Hilson P."/>
        </authorList>
    </citation>
    <scope>NUCLEOTIDE SEQUENCE [LARGE SCALE MRNA]</scope>
    <source>
        <strain>cv. Columbia</strain>
    </source>
</reference>
<reference key="4">
    <citation type="journal article" date="2009" name="FEBS J.">
        <title>Molecular characterization of Arabidopsis thaliana PUF proteins -- binding specificity and target candidates.</title>
        <authorList>
            <person name="Francischini C.W."/>
            <person name="Quaggio R.B."/>
        </authorList>
    </citation>
    <scope>GENE FAMILY</scope>
</reference>
<reference key="5">
    <citation type="journal article" date="2010" name="BMC Plant Biol.">
        <title>The Puf family of RNA-binding proteins in plants: phylogeny, structural modeling, activity and subcellular localization.</title>
        <authorList>
            <person name="Tam P.P."/>
            <person name="Barrette-Ng I.H."/>
            <person name="Simon D.M."/>
            <person name="Tam M.W."/>
            <person name="Ang A.L."/>
            <person name="Muench D.G."/>
        </authorList>
    </citation>
    <scope>GENE FAMILY</scope>
</reference>
<protein>
    <recommendedName>
        <fullName>Pumilio homolog 14</fullName>
        <shortName>APUM-14</shortName>
        <shortName>AtPUM14</shortName>
    </recommendedName>
</protein>
<sequence length="518" mass="59449">MDKNFRVNTNDERNIWLSTAVNENLTMASSSSQPQPISSPFHQPENQVNRVNPGSHYYDLETLESSFGGLSFNDSSVGQNGDSIHLPRRTNQVFTGSSSGGAGDDNGYLLPPMGSHHHRELEELQRHNYLNQLRMSYQNDYAHQSYWYNTDGDGNGMLNNGFLNDVPSSSRDRVSDYYTNRFGYEGYNYWRGNEGFDYNQCQASFSAFAKDKEMSERLGMSIFQGTKETVDAIYNGLIGDICELMVDPYGSDVVQLLMRRCSSEQIVQLVDIVTQQMFQFVNICIDSLGTNAIQVLLTCINERAKDQIPRIVDVVRTVALQLSKSNHAIFVILACFRLFPLHCRLLLELIVQNCHQIAIDQHGCCLLQLCFNKDRVPNLEIRQRLIMEAIANALRLCLNCYGNYVVQYIVELNNRYLIDALVRQLIGNYAHLARNKYGSHAVQKLLKLRWIDSRVIVIDLLREIDTLLLDPFGNYVIQTAWFVSKDDVRRMLRYHIERNIPMMRCNKFGNKVLEKLNI</sequence>
<comment type="function">
    <text evidence="1">Sequence-specific RNA-binding protein that regulates translation and mRNA stability by binding the 3'-UTR of target mRNAs.</text>
</comment>
<comment type="subcellular location">
    <subcellularLocation>
        <location>Cytoplasm</location>
    </subcellularLocation>
    <subcellularLocation>
        <location>Nucleus</location>
    </subcellularLocation>
</comment>
<comment type="domain">
    <text evidence="1">The pumilio repeats mediate the association with RNA by packing together to form a right-handed superhelix that approximates a half donut. The number as well as the specific sequence of the repeats determine the specificity for target mRNAs (By similarity).</text>
</comment>
<comment type="sequence caution" evidence="4">
    <conflict type="erroneous gene model prediction">
        <sequence resource="EMBL-CDS" id="BAB08275"/>
    </conflict>
</comment>
<feature type="chain" id="PRO_0000401396" description="Pumilio homolog 14">
    <location>
        <begin position="1"/>
        <end position="518"/>
    </location>
</feature>
<feature type="domain" description="PUM-HD" evidence="2">
    <location>
        <begin position="178"/>
        <end position="518"/>
    </location>
</feature>
<feature type="repeat" description="Pumilio 1; degenerate">
    <location>
        <begin position="206"/>
        <end position="235"/>
    </location>
</feature>
<feature type="repeat" description="Pumilio 2">
    <location>
        <begin position="236"/>
        <end position="271"/>
    </location>
</feature>
<feature type="repeat" description="Pumilio 3">
    <location>
        <begin position="275"/>
        <end position="313"/>
    </location>
</feature>
<feature type="repeat" description="Pumilio 4">
    <location>
        <begin position="314"/>
        <end position="348"/>
    </location>
</feature>
<feature type="repeat" description="Pumilio 5">
    <location>
        <begin position="349"/>
        <end position="387"/>
    </location>
</feature>
<feature type="repeat" description="Pumilio 6">
    <location>
        <begin position="388"/>
        <end position="423"/>
    </location>
</feature>
<feature type="repeat" description="Pumilio 7">
    <location>
        <begin position="424"/>
        <end position="459"/>
    </location>
</feature>
<feature type="repeat" description="Pumilio 8">
    <location>
        <begin position="460"/>
        <end position="494"/>
    </location>
</feature>
<feature type="region of interest" description="Disordered" evidence="3">
    <location>
        <begin position="26"/>
        <end position="46"/>
    </location>
</feature>
<feature type="region of interest" description="Disordered" evidence="3">
    <location>
        <begin position="77"/>
        <end position="114"/>
    </location>
</feature>
<feature type="compositionally biased region" description="Low complexity" evidence="3">
    <location>
        <begin position="29"/>
        <end position="44"/>
    </location>
</feature>
<name>PUM14_ARATH</name>
<organism>
    <name type="scientific">Arabidopsis thaliana</name>
    <name type="common">Mouse-ear cress</name>
    <dbReference type="NCBI Taxonomy" id="3702"/>
    <lineage>
        <taxon>Eukaryota</taxon>
        <taxon>Viridiplantae</taxon>
        <taxon>Streptophyta</taxon>
        <taxon>Embryophyta</taxon>
        <taxon>Tracheophyta</taxon>
        <taxon>Spermatophyta</taxon>
        <taxon>Magnoliopsida</taxon>
        <taxon>eudicotyledons</taxon>
        <taxon>Gunneridae</taxon>
        <taxon>Pentapetalae</taxon>
        <taxon>rosids</taxon>
        <taxon>malvids</taxon>
        <taxon>Brassicales</taxon>
        <taxon>Brassicaceae</taxon>
        <taxon>Camelineae</taxon>
        <taxon>Arabidopsis</taxon>
    </lineage>
</organism>